<keyword id="KW-0067">ATP-binding</keyword>
<keyword id="KW-0436">Ligase</keyword>
<keyword id="KW-0479">Metal-binding</keyword>
<keyword id="KW-0547">Nucleotide-binding</keyword>
<keyword id="KW-0671">Queuosine biosynthesis</keyword>
<keyword id="KW-0862">Zinc</keyword>
<proteinExistence type="inferred from homology"/>
<gene>
    <name evidence="1" type="primary">queC2</name>
    <name type="ordered locus">CPS_2937</name>
</gene>
<evidence type="ECO:0000255" key="1">
    <source>
        <dbReference type="HAMAP-Rule" id="MF_01633"/>
    </source>
</evidence>
<protein>
    <recommendedName>
        <fullName evidence="1">7-cyano-7-deazaguanine synthase 2</fullName>
        <ecNumber evidence="1">6.3.4.20</ecNumber>
    </recommendedName>
    <alternativeName>
        <fullName evidence="1">7-cyano-7-carbaguanine synthase 2</fullName>
    </alternativeName>
    <alternativeName>
        <fullName evidence="1">PreQ(0) synthase 2</fullName>
    </alternativeName>
    <alternativeName>
        <fullName evidence="1">Queuosine biosynthesis protein QueC 2</fullName>
    </alternativeName>
</protein>
<dbReference type="EC" id="6.3.4.20" evidence="1"/>
<dbReference type="EMBL" id="CP000083">
    <property type="protein sequence ID" value="AAZ24757.1"/>
    <property type="molecule type" value="Genomic_DNA"/>
</dbReference>
<dbReference type="RefSeq" id="WP_011043729.1">
    <property type="nucleotide sequence ID" value="NC_003910.7"/>
</dbReference>
<dbReference type="SMR" id="Q47ZY2"/>
<dbReference type="STRING" id="167879.CPS_2937"/>
<dbReference type="KEGG" id="cps:CPS_2937"/>
<dbReference type="HOGENOM" id="CLU_081854_1_0_6"/>
<dbReference type="UniPathway" id="UPA00391"/>
<dbReference type="Proteomes" id="UP000000547">
    <property type="component" value="Chromosome"/>
</dbReference>
<dbReference type="GO" id="GO:0005524">
    <property type="term" value="F:ATP binding"/>
    <property type="evidence" value="ECO:0007669"/>
    <property type="project" value="UniProtKB-UniRule"/>
</dbReference>
<dbReference type="GO" id="GO:0016879">
    <property type="term" value="F:ligase activity, forming carbon-nitrogen bonds"/>
    <property type="evidence" value="ECO:0007669"/>
    <property type="project" value="UniProtKB-UniRule"/>
</dbReference>
<dbReference type="GO" id="GO:0008270">
    <property type="term" value="F:zinc ion binding"/>
    <property type="evidence" value="ECO:0007669"/>
    <property type="project" value="UniProtKB-UniRule"/>
</dbReference>
<dbReference type="GO" id="GO:0008616">
    <property type="term" value="P:queuosine biosynthetic process"/>
    <property type="evidence" value="ECO:0007669"/>
    <property type="project" value="UniProtKB-UniRule"/>
</dbReference>
<dbReference type="CDD" id="cd01995">
    <property type="entry name" value="QueC-like"/>
    <property type="match status" value="1"/>
</dbReference>
<dbReference type="Gene3D" id="3.40.50.620">
    <property type="entry name" value="HUPs"/>
    <property type="match status" value="1"/>
</dbReference>
<dbReference type="HAMAP" id="MF_01633">
    <property type="entry name" value="QueC"/>
    <property type="match status" value="1"/>
</dbReference>
<dbReference type="InterPro" id="IPR018317">
    <property type="entry name" value="QueC"/>
</dbReference>
<dbReference type="InterPro" id="IPR014729">
    <property type="entry name" value="Rossmann-like_a/b/a_fold"/>
</dbReference>
<dbReference type="NCBIfam" id="TIGR00364">
    <property type="entry name" value="7-cyano-7-deazaguanine synthase QueC"/>
    <property type="match status" value="1"/>
</dbReference>
<dbReference type="PANTHER" id="PTHR42914">
    <property type="entry name" value="7-CYANO-7-DEAZAGUANINE SYNTHASE"/>
    <property type="match status" value="1"/>
</dbReference>
<dbReference type="PANTHER" id="PTHR42914:SF1">
    <property type="entry name" value="7-CYANO-7-DEAZAGUANINE SYNTHASE"/>
    <property type="match status" value="1"/>
</dbReference>
<dbReference type="Pfam" id="PF06508">
    <property type="entry name" value="QueC"/>
    <property type="match status" value="1"/>
</dbReference>
<dbReference type="PIRSF" id="PIRSF006293">
    <property type="entry name" value="ExsB"/>
    <property type="match status" value="1"/>
</dbReference>
<dbReference type="SUPFAM" id="SSF52402">
    <property type="entry name" value="Adenine nucleotide alpha hydrolases-like"/>
    <property type="match status" value="1"/>
</dbReference>
<feature type="chain" id="PRO_0000246832" description="7-cyano-7-deazaguanine synthase 2">
    <location>
        <begin position="1"/>
        <end position="219"/>
    </location>
</feature>
<feature type="binding site" evidence="1">
    <location>
        <begin position="8"/>
        <end position="18"/>
    </location>
    <ligand>
        <name>ATP</name>
        <dbReference type="ChEBI" id="CHEBI:30616"/>
    </ligand>
</feature>
<feature type="binding site" evidence="1">
    <location>
        <position position="185"/>
    </location>
    <ligand>
        <name>Zn(2+)</name>
        <dbReference type="ChEBI" id="CHEBI:29105"/>
    </ligand>
</feature>
<feature type="binding site" evidence="1">
    <location>
        <position position="193"/>
    </location>
    <ligand>
        <name>Zn(2+)</name>
        <dbReference type="ChEBI" id="CHEBI:29105"/>
    </ligand>
</feature>
<feature type="binding site" evidence="1">
    <location>
        <position position="196"/>
    </location>
    <ligand>
        <name>Zn(2+)</name>
        <dbReference type="ChEBI" id="CHEBI:29105"/>
    </ligand>
</feature>
<feature type="binding site" evidence="1">
    <location>
        <position position="199"/>
    </location>
    <ligand>
        <name>Zn(2+)</name>
        <dbReference type="ChEBI" id="CHEBI:29105"/>
    </ligand>
</feature>
<sequence>MKKLVVIYSGGMDSFTALNKAVKEGFDVYALSFDYGQKHNKELIYAQNVCNELNVPHKILDIKSISTLFTSSSLVSDDINVPDGHYEADNMKSTVVPNRNMILISLAIGYAVDIEAEGVWYGAHSGDHLIYPDCRPEFVKVMDQASKVANFEPVYVHAPYLNTDKIGILKDGIKMGLDYSKTWTCYQGKEKACGTCGSCVERLEAFQANNIDDPVQYSI</sequence>
<name>QUEC2_COLP3</name>
<organism>
    <name type="scientific">Colwellia psychrerythraea (strain 34H / ATCC BAA-681)</name>
    <name type="common">Vibrio psychroerythus</name>
    <dbReference type="NCBI Taxonomy" id="167879"/>
    <lineage>
        <taxon>Bacteria</taxon>
        <taxon>Pseudomonadati</taxon>
        <taxon>Pseudomonadota</taxon>
        <taxon>Gammaproteobacteria</taxon>
        <taxon>Alteromonadales</taxon>
        <taxon>Colwelliaceae</taxon>
        <taxon>Colwellia</taxon>
    </lineage>
</organism>
<reference key="1">
    <citation type="journal article" date="2005" name="Proc. Natl. Acad. Sci. U.S.A.">
        <title>The psychrophilic lifestyle as revealed by the genome sequence of Colwellia psychrerythraea 34H through genomic and proteomic analyses.</title>
        <authorList>
            <person name="Methe B.A."/>
            <person name="Nelson K.E."/>
            <person name="Deming J.W."/>
            <person name="Momen B."/>
            <person name="Melamud E."/>
            <person name="Zhang X."/>
            <person name="Moult J."/>
            <person name="Madupu R."/>
            <person name="Nelson W.C."/>
            <person name="Dodson R.J."/>
            <person name="Brinkac L.M."/>
            <person name="Daugherty S.C."/>
            <person name="Durkin A.S."/>
            <person name="DeBoy R.T."/>
            <person name="Kolonay J.F."/>
            <person name="Sullivan S.A."/>
            <person name="Zhou L."/>
            <person name="Davidsen T.M."/>
            <person name="Wu M."/>
            <person name="Huston A.L."/>
            <person name="Lewis M."/>
            <person name="Weaver B."/>
            <person name="Weidman J.F."/>
            <person name="Khouri H."/>
            <person name="Utterback T.R."/>
            <person name="Feldblyum T.V."/>
            <person name="Fraser C.M."/>
        </authorList>
    </citation>
    <scope>NUCLEOTIDE SEQUENCE [LARGE SCALE GENOMIC DNA]</scope>
    <source>
        <strain>34H / ATCC BAA-681</strain>
    </source>
</reference>
<accession>Q47ZY2</accession>
<comment type="function">
    <text evidence="1">Catalyzes the ATP-dependent conversion of 7-carboxy-7-deazaguanine (CDG) to 7-cyano-7-deazaguanine (preQ(0)).</text>
</comment>
<comment type="catalytic activity">
    <reaction evidence="1">
        <text>7-carboxy-7-deazaguanine + NH4(+) + ATP = 7-cyano-7-deazaguanine + ADP + phosphate + H2O + H(+)</text>
        <dbReference type="Rhea" id="RHEA:27982"/>
        <dbReference type="ChEBI" id="CHEBI:15377"/>
        <dbReference type="ChEBI" id="CHEBI:15378"/>
        <dbReference type="ChEBI" id="CHEBI:28938"/>
        <dbReference type="ChEBI" id="CHEBI:30616"/>
        <dbReference type="ChEBI" id="CHEBI:43474"/>
        <dbReference type="ChEBI" id="CHEBI:45075"/>
        <dbReference type="ChEBI" id="CHEBI:61036"/>
        <dbReference type="ChEBI" id="CHEBI:456216"/>
        <dbReference type="EC" id="6.3.4.20"/>
    </reaction>
</comment>
<comment type="cofactor">
    <cofactor evidence="1">
        <name>Zn(2+)</name>
        <dbReference type="ChEBI" id="CHEBI:29105"/>
    </cofactor>
    <text evidence="1">Binds 1 zinc ion per subunit.</text>
</comment>
<comment type="pathway">
    <text evidence="1">Purine metabolism; 7-cyano-7-deazaguanine biosynthesis.</text>
</comment>
<comment type="similarity">
    <text evidence="1">Belongs to the QueC family.</text>
</comment>